<accession>Q7VVJ8</accession>
<comment type="function">
    <text evidence="1">Catalyzes the complex heterocyclic radical-mediated conversion of 6-carboxy-5,6,7,8-tetrahydropterin (CPH4) to 7-carboxy-7-deazaguanine (CDG), a step common to the biosynthetic pathways of all 7-deazapurine-containing compounds.</text>
</comment>
<comment type="catalytic activity">
    <reaction evidence="1">
        <text>6-carboxy-5,6,7,8-tetrahydropterin + H(+) = 7-carboxy-7-deazaguanine + NH4(+)</text>
        <dbReference type="Rhea" id="RHEA:27974"/>
        <dbReference type="ChEBI" id="CHEBI:15378"/>
        <dbReference type="ChEBI" id="CHEBI:28938"/>
        <dbReference type="ChEBI" id="CHEBI:61032"/>
        <dbReference type="ChEBI" id="CHEBI:61036"/>
        <dbReference type="EC" id="4.3.99.3"/>
    </reaction>
</comment>
<comment type="cofactor">
    <cofactor evidence="1">
        <name>[4Fe-4S] cluster</name>
        <dbReference type="ChEBI" id="CHEBI:49883"/>
    </cofactor>
    <text evidence="1">Binds 1 [4Fe-4S] cluster. The cluster is coordinated with 3 cysteines and an exchangeable S-adenosyl-L-methionine.</text>
</comment>
<comment type="cofactor">
    <cofactor evidence="1">
        <name>S-adenosyl-L-methionine</name>
        <dbReference type="ChEBI" id="CHEBI:59789"/>
    </cofactor>
    <text evidence="1">Binds 1 S-adenosyl-L-methionine per subunit.</text>
</comment>
<comment type="cofactor">
    <cofactor evidence="1">
        <name>Mg(2+)</name>
        <dbReference type="ChEBI" id="CHEBI:18420"/>
    </cofactor>
</comment>
<comment type="pathway">
    <text evidence="1">Purine metabolism; 7-cyano-7-deazaguanine biosynthesis.</text>
</comment>
<comment type="subunit">
    <text evidence="1">Homodimer.</text>
</comment>
<comment type="similarity">
    <text evidence="1">Belongs to the radical SAM superfamily. 7-carboxy-7-deazaguanine synthase family.</text>
</comment>
<protein>
    <recommendedName>
        <fullName evidence="1">7-carboxy-7-deazaguanine synthase</fullName>
        <shortName evidence="1">CDG synthase</shortName>
        <ecNumber evidence="1">4.3.99.3</ecNumber>
    </recommendedName>
    <alternativeName>
        <fullName evidence="1">Queuosine biosynthesis protein QueE</fullName>
    </alternativeName>
</protein>
<evidence type="ECO:0000255" key="1">
    <source>
        <dbReference type="HAMAP-Rule" id="MF_00917"/>
    </source>
</evidence>
<evidence type="ECO:0000255" key="2">
    <source>
        <dbReference type="PROSITE-ProRule" id="PRU01266"/>
    </source>
</evidence>
<dbReference type="EC" id="4.3.99.3" evidence="1"/>
<dbReference type="EMBL" id="BX640419">
    <property type="protein sequence ID" value="CAE42935.1"/>
    <property type="molecule type" value="Genomic_DNA"/>
</dbReference>
<dbReference type="RefSeq" id="NP_881273.1">
    <property type="nucleotide sequence ID" value="NC_002929.2"/>
</dbReference>
<dbReference type="RefSeq" id="WP_010931061.1">
    <property type="nucleotide sequence ID" value="NZ_CP039022.1"/>
</dbReference>
<dbReference type="SMR" id="Q7VVJ8"/>
<dbReference type="STRING" id="257313.BP2659"/>
<dbReference type="PaxDb" id="257313-BP2659"/>
<dbReference type="GeneID" id="69602562"/>
<dbReference type="KEGG" id="bpe:BP2659"/>
<dbReference type="PATRIC" id="fig|257313.5.peg.2863"/>
<dbReference type="eggNOG" id="COG0602">
    <property type="taxonomic scope" value="Bacteria"/>
</dbReference>
<dbReference type="HOGENOM" id="CLU_066739_0_1_4"/>
<dbReference type="UniPathway" id="UPA00391"/>
<dbReference type="Proteomes" id="UP000002676">
    <property type="component" value="Chromosome"/>
</dbReference>
<dbReference type="GO" id="GO:0051539">
    <property type="term" value="F:4 iron, 4 sulfur cluster binding"/>
    <property type="evidence" value="ECO:0007669"/>
    <property type="project" value="UniProtKB-UniRule"/>
</dbReference>
<dbReference type="GO" id="GO:0016840">
    <property type="term" value="F:carbon-nitrogen lyase activity"/>
    <property type="evidence" value="ECO:0007669"/>
    <property type="project" value="UniProtKB-UniRule"/>
</dbReference>
<dbReference type="GO" id="GO:0000287">
    <property type="term" value="F:magnesium ion binding"/>
    <property type="evidence" value="ECO:0007669"/>
    <property type="project" value="UniProtKB-UniRule"/>
</dbReference>
<dbReference type="GO" id="GO:1904047">
    <property type="term" value="F:S-adenosyl-L-methionine binding"/>
    <property type="evidence" value="ECO:0007669"/>
    <property type="project" value="UniProtKB-UniRule"/>
</dbReference>
<dbReference type="GO" id="GO:0008616">
    <property type="term" value="P:queuosine biosynthetic process"/>
    <property type="evidence" value="ECO:0007669"/>
    <property type="project" value="UniProtKB-UniRule"/>
</dbReference>
<dbReference type="Gene3D" id="3.20.20.70">
    <property type="entry name" value="Aldolase class I"/>
    <property type="match status" value="1"/>
</dbReference>
<dbReference type="HAMAP" id="MF_00917">
    <property type="entry name" value="QueE"/>
    <property type="match status" value="1"/>
</dbReference>
<dbReference type="InterPro" id="IPR024924">
    <property type="entry name" value="7-CO-7-deazaguanine_synth-like"/>
</dbReference>
<dbReference type="InterPro" id="IPR013785">
    <property type="entry name" value="Aldolase_TIM"/>
</dbReference>
<dbReference type="InterPro" id="IPR030977">
    <property type="entry name" value="QueE_Cx14CxxC"/>
</dbReference>
<dbReference type="InterPro" id="IPR007197">
    <property type="entry name" value="rSAM"/>
</dbReference>
<dbReference type="NCBIfam" id="TIGR04508">
    <property type="entry name" value="queE_Cx14CxxC"/>
    <property type="match status" value="1"/>
</dbReference>
<dbReference type="PANTHER" id="PTHR42836">
    <property type="entry name" value="7-CARBOXY-7-DEAZAGUANINE SYNTHASE"/>
    <property type="match status" value="1"/>
</dbReference>
<dbReference type="PANTHER" id="PTHR42836:SF1">
    <property type="entry name" value="7-CARBOXY-7-DEAZAGUANINE SYNTHASE"/>
    <property type="match status" value="1"/>
</dbReference>
<dbReference type="PIRSF" id="PIRSF000370">
    <property type="entry name" value="QueE"/>
    <property type="match status" value="1"/>
</dbReference>
<dbReference type="SFLD" id="SFLDF00376">
    <property type="entry name" value="7-carboxy-7-deazaguanine_synth"/>
    <property type="match status" value="1"/>
</dbReference>
<dbReference type="SFLD" id="SFLDS00029">
    <property type="entry name" value="Radical_SAM"/>
    <property type="match status" value="1"/>
</dbReference>
<dbReference type="SUPFAM" id="SSF102114">
    <property type="entry name" value="Radical SAM enzymes"/>
    <property type="match status" value="1"/>
</dbReference>
<dbReference type="PROSITE" id="PS51918">
    <property type="entry name" value="RADICAL_SAM"/>
    <property type="match status" value="1"/>
</dbReference>
<sequence>MAYSVKELFKTLQGEGAQAGRAAVFCRFAGCNLWTGRESDRAGAACTFCDTDFVGTDGQGGGKFADAAGLADAIAACWGEHPADRYVVFTGGEPLLQLDEALLQAVHAQGFTVAIETNGTLPPPPGIDWICVSPKGRAPVVVERGHELKLVFPQADARPEAFAHLAFEHFFLQPMDGPARAAHTTQAVQYCLDHPQWRLSLQTHKYIGIP</sequence>
<reference key="1">
    <citation type="journal article" date="2003" name="Nat. Genet.">
        <title>Comparative analysis of the genome sequences of Bordetella pertussis, Bordetella parapertussis and Bordetella bronchiseptica.</title>
        <authorList>
            <person name="Parkhill J."/>
            <person name="Sebaihia M."/>
            <person name="Preston A."/>
            <person name="Murphy L.D."/>
            <person name="Thomson N.R."/>
            <person name="Harris D.E."/>
            <person name="Holden M.T.G."/>
            <person name="Churcher C.M."/>
            <person name="Bentley S.D."/>
            <person name="Mungall K.L."/>
            <person name="Cerdeno-Tarraga A.-M."/>
            <person name="Temple L."/>
            <person name="James K.D."/>
            <person name="Harris B."/>
            <person name="Quail M.A."/>
            <person name="Achtman M."/>
            <person name="Atkin R."/>
            <person name="Baker S."/>
            <person name="Basham D."/>
            <person name="Bason N."/>
            <person name="Cherevach I."/>
            <person name="Chillingworth T."/>
            <person name="Collins M."/>
            <person name="Cronin A."/>
            <person name="Davis P."/>
            <person name="Doggett J."/>
            <person name="Feltwell T."/>
            <person name="Goble A."/>
            <person name="Hamlin N."/>
            <person name="Hauser H."/>
            <person name="Holroyd S."/>
            <person name="Jagels K."/>
            <person name="Leather S."/>
            <person name="Moule S."/>
            <person name="Norberczak H."/>
            <person name="O'Neil S."/>
            <person name="Ormond D."/>
            <person name="Price C."/>
            <person name="Rabbinowitsch E."/>
            <person name="Rutter S."/>
            <person name="Sanders M."/>
            <person name="Saunders D."/>
            <person name="Seeger K."/>
            <person name="Sharp S."/>
            <person name="Simmonds M."/>
            <person name="Skelton J."/>
            <person name="Squares R."/>
            <person name="Squares S."/>
            <person name="Stevens K."/>
            <person name="Unwin L."/>
            <person name="Whitehead S."/>
            <person name="Barrell B.G."/>
            <person name="Maskell D.J."/>
        </authorList>
    </citation>
    <scope>NUCLEOTIDE SEQUENCE [LARGE SCALE GENOMIC DNA]</scope>
    <source>
        <strain>Tohama I / ATCC BAA-589 / NCTC 13251</strain>
    </source>
</reference>
<keyword id="KW-0004">4Fe-4S</keyword>
<keyword id="KW-0408">Iron</keyword>
<keyword id="KW-0411">Iron-sulfur</keyword>
<keyword id="KW-0456">Lyase</keyword>
<keyword id="KW-0460">Magnesium</keyword>
<keyword id="KW-0479">Metal-binding</keyword>
<keyword id="KW-0671">Queuosine biosynthesis</keyword>
<keyword id="KW-1185">Reference proteome</keyword>
<keyword id="KW-0949">S-adenosyl-L-methionine</keyword>
<gene>
    <name evidence="1" type="primary">queE</name>
    <name type="ordered locus">BP2659</name>
</gene>
<name>QUEE_BORPE</name>
<proteinExistence type="inferred from homology"/>
<feature type="chain" id="PRO_0000416197" description="7-carboxy-7-deazaguanine synthase">
    <location>
        <begin position="1"/>
        <end position="210"/>
    </location>
</feature>
<feature type="domain" description="Radical SAM core" evidence="2">
    <location>
        <begin position="18"/>
        <end position="210"/>
    </location>
</feature>
<feature type="binding site" evidence="1">
    <location>
        <begin position="12"/>
        <end position="14"/>
    </location>
    <ligand>
        <name>substrate</name>
    </ligand>
</feature>
<feature type="binding site" evidence="1">
    <location>
        <position position="27"/>
    </location>
    <ligand>
        <name>substrate</name>
    </ligand>
</feature>
<feature type="binding site" evidence="1">
    <location>
        <position position="31"/>
    </location>
    <ligand>
        <name>[4Fe-4S] cluster</name>
        <dbReference type="ChEBI" id="CHEBI:49883"/>
        <note>4Fe-4S-S-AdoMet</note>
    </ligand>
</feature>
<feature type="binding site" evidence="1">
    <location>
        <position position="46"/>
    </location>
    <ligand>
        <name>[4Fe-4S] cluster</name>
        <dbReference type="ChEBI" id="CHEBI:49883"/>
        <note>4Fe-4S-S-AdoMet</note>
    </ligand>
</feature>
<feature type="binding site" evidence="1">
    <location>
        <position position="49"/>
    </location>
    <ligand>
        <name>[4Fe-4S] cluster</name>
        <dbReference type="ChEBI" id="CHEBI:49883"/>
        <note>4Fe-4S-S-AdoMet</note>
    </ligand>
</feature>
<feature type="binding site" evidence="1">
    <location>
        <position position="51"/>
    </location>
    <ligand>
        <name>Mg(2+)</name>
        <dbReference type="ChEBI" id="CHEBI:18420"/>
    </ligand>
</feature>
<feature type="binding site" evidence="1">
    <location>
        <position position="90"/>
    </location>
    <ligand>
        <name>substrate</name>
    </ligand>
</feature>
<feature type="binding site" evidence="1">
    <location>
        <position position="92"/>
    </location>
    <ligand>
        <name>S-adenosyl-L-methionine</name>
        <dbReference type="ChEBI" id="CHEBI:59789"/>
    </ligand>
</feature>
<feature type="binding site" evidence="1">
    <location>
        <begin position="133"/>
        <end position="135"/>
    </location>
    <ligand>
        <name>S-adenosyl-L-methionine</name>
        <dbReference type="ChEBI" id="CHEBI:59789"/>
    </ligand>
</feature>
<feature type="binding site" evidence="1">
    <location>
        <begin position="173"/>
        <end position="176"/>
    </location>
    <ligand>
        <name>S-adenosyl-L-methionine</name>
        <dbReference type="ChEBI" id="CHEBI:59789"/>
    </ligand>
</feature>
<feature type="binding site" evidence="1">
    <location>
        <position position="210"/>
    </location>
    <ligand>
        <name>substrate</name>
    </ligand>
</feature>
<organism>
    <name type="scientific">Bordetella pertussis (strain Tohama I / ATCC BAA-589 / NCTC 13251)</name>
    <dbReference type="NCBI Taxonomy" id="257313"/>
    <lineage>
        <taxon>Bacteria</taxon>
        <taxon>Pseudomonadati</taxon>
        <taxon>Pseudomonadota</taxon>
        <taxon>Betaproteobacteria</taxon>
        <taxon>Burkholderiales</taxon>
        <taxon>Alcaligenaceae</taxon>
        <taxon>Bordetella</taxon>
    </lineage>
</organism>